<protein>
    <recommendedName>
        <fullName evidence="1">Non-structural protein 1</fullName>
        <shortName evidence="1">NS1</shortName>
    </recommendedName>
    <alternativeName>
        <fullName evidence="1">NS1A</fullName>
    </alternativeName>
</protein>
<organismHost>
    <name type="scientific">Aves</name>
    <dbReference type="NCBI Taxonomy" id="8782"/>
</organismHost>
<sequence length="230" mass="26120">MDSNTITSFQVDCYLWHIRKLLSMRDMCDAPFDDRLRRDQKALKGRGSTLGLDLRVATMEGKKIVEDILKSETDENLKIAIASSPDPRYITDMSIEEISREWYMLMPRQKITGGLMVKMDQAIMDKRIILKANFSVLFDQLETLVSLRAFTEDGAIVAEISPIPSMPGHSTEDVKNAIGILIGGLEWNDNSIRASENIQRFAWGIRDEDGGPPLPPKQKRYMARRVESEV</sequence>
<reference key="1">
    <citation type="journal article" date="1989" name="Virology">
        <title>The B allele of the NS gene of avian influenza viruses, but not the A allele, attenuates a human influenza A virus for squirrel monkeys.</title>
        <authorList>
            <person name="Treanor J.J."/>
            <person name="Snyder M.H."/>
            <person name="London W.T."/>
            <person name="Murphy B.R."/>
        </authorList>
    </citation>
    <scope>NUCLEOTIDE SEQUENCE [GENOMIC RNA]</scope>
</reference>
<reference key="2">
    <citation type="journal article" date="2003" name="Virology">
        <title>Intracellular warfare between human influenza viruses and human cells: the roles of the viral NS1 protein.</title>
        <authorList>
            <person name="Krug R.M."/>
            <person name="Yuan W."/>
            <person name="Noah D.L."/>
            <person name="Latham A.G."/>
        </authorList>
    </citation>
    <scope>REVIEW</scope>
</reference>
<proteinExistence type="inferred from homology"/>
<organism>
    <name type="scientific">Influenza A virus (strain A/Pintail/Alberta/121/1979 H7N8)</name>
    <dbReference type="NCBI Taxonomy" id="11450"/>
    <lineage>
        <taxon>Viruses</taxon>
        <taxon>Riboviria</taxon>
        <taxon>Orthornavirae</taxon>
        <taxon>Negarnaviricota</taxon>
        <taxon>Polyploviricotina</taxon>
        <taxon>Insthoviricetes</taxon>
        <taxon>Articulavirales</taxon>
        <taxon>Orthomyxoviridae</taxon>
        <taxon>Alphainfluenzavirus</taxon>
        <taxon>Alphainfluenzavirus influenzae</taxon>
        <taxon>Influenza A virus</taxon>
    </lineage>
</organism>
<keyword id="KW-0025">Alternative splicing</keyword>
<keyword id="KW-1262">Eukaryotic host gene expression shutoff by virus</keyword>
<keyword id="KW-1035">Host cytoplasm</keyword>
<keyword id="KW-1190">Host gene expression shutoff by virus</keyword>
<keyword id="KW-1192">Host mRNA suppression by virus</keyword>
<keyword id="KW-1048">Host nucleus</keyword>
<keyword id="KW-0945">Host-virus interaction</keyword>
<keyword id="KW-1090">Inhibition of host innate immune response by virus</keyword>
<keyword id="KW-1114">Inhibition of host interferon signaling pathway by virus</keyword>
<keyword id="KW-1102">Inhibition of host PKR by virus</keyword>
<keyword id="KW-1103">Inhibition of host pre-mRNA processing by virus</keyword>
<keyword id="KW-1088">Inhibition of host RIG-I by virus</keyword>
<keyword id="KW-1113">Inhibition of host RLR pathway by virus</keyword>
<keyword id="KW-0922">Interferon antiviral system evasion</keyword>
<keyword id="KW-0694">RNA-binding</keyword>
<keyword id="KW-0832">Ubl conjugation</keyword>
<keyword id="KW-0899">Viral immunoevasion</keyword>
<dbReference type="EMBL" id="M25371">
    <property type="protein sequence ID" value="AAA43561.1"/>
    <property type="molecule type" value="Genomic_RNA"/>
</dbReference>
<dbReference type="PIR" id="E32663">
    <property type="entry name" value="MNIVA7"/>
</dbReference>
<dbReference type="SMR" id="P13141"/>
<dbReference type="GO" id="GO:0030430">
    <property type="term" value="C:host cell cytoplasm"/>
    <property type="evidence" value="ECO:0007669"/>
    <property type="project" value="UniProtKB-SubCell"/>
</dbReference>
<dbReference type="GO" id="GO:0042025">
    <property type="term" value="C:host cell nucleus"/>
    <property type="evidence" value="ECO:0007669"/>
    <property type="project" value="UniProtKB-SubCell"/>
</dbReference>
<dbReference type="GO" id="GO:0030291">
    <property type="term" value="F:protein serine/threonine kinase inhibitor activity"/>
    <property type="evidence" value="ECO:0007669"/>
    <property type="project" value="UniProtKB-KW"/>
</dbReference>
<dbReference type="GO" id="GO:0003723">
    <property type="term" value="F:RNA binding"/>
    <property type="evidence" value="ECO:0007669"/>
    <property type="project" value="UniProtKB-KW"/>
</dbReference>
<dbReference type="GO" id="GO:0039540">
    <property type="term" value="P:symbiont-mediated suppression of host cytoplasmic pattern recognition receptor signaling pathway via inhibition of RIG-I activity"/>
    <property type="evidence" value="ECO:0007669"/>
    <property type="project" value="UniProtKB-KW"/>
</dbReference>
<dbReference type="GO" id="GO:0039657">
    <property type="term" value="P:symbiont-mediated suppression of host gene expression"/>
    <property type="evidence" value="ECO:0007669"/>
    <property type="project" value="UniProtKB-KW"/>
</dbReference>
<dbReference type="GO" id="GO:0039524">
    <property type="term" value="P:symbiont-mediated suppression of host mRNA processing"/>
    <property type="evidence" value="ECO:0007669"/>
    <property type="project" value="UniProtKB-KW"/>
</dbReference>
<dbReference type="GO" id="GO:0039580">
    <property type="term" value="P:symbiont-mediated suppression of host PKR/eIFalpha signaling"/>
    <property type="evidence" value="ECO:0007669"/>
    <property type="project" value="UniProtKB-KW"/>
</dbReference>
<dbReference type="GO" id="GO:0039502">
    <property type="term" value="P:symbiont-mediated suppression of host type I interferon-mediated signaling pathway"/>
    <property type="evidence" value="ECO:0007669"/>
    <property type="project" value="UniProtKB-KW"/>
</dbReference>
<dbReference type="Gene3D" id="3.30.420.330">
    <property type="entry name" value="Influenza virus non-structural protein, effector domain"/>
    <property type="match status" value="1"/>
</dbReference>
<dbReference type="Gene3D" id="1.10.287.10">
    <property type="entry name" value="S15/NS1, RNA-binding"/>
    <property type="match status" value="1"/>
</dbReference>
<dbReference type="HAMAP" id="MF_04066">
    <property type="entry name" value="INFV_NS1"/>
    <property type="match status" value="1"/>
</dbReference>
<dbReference type="InterPro" id="IPR004208">
    <property type="entry name" value="NS1"/>
</dbReference>
<dbReference type="InterPro" id="IPR000256">
    <property type="entry name" value="NS1A"/>
</dbReference>
<dbReference type="InterPro" id="IPR038064">
    <property type="entry name" value="NS1A_effect_dom-like_sf"/>
</dbReference>
<dbReference type="InterPro" id="IPR009068">
    <property type="entry name" value="uS15_NS1_RNA-bd_sf"/>
</dbReference>
<dbReference type="Pfam" id="PF00600">
    <property type="entry name" value="Flu_NS1"/>
    <property type="match status" value="1"/>
</dbReference>
<dbReference type="SUPFAM" id="SSF143021">
    <property type="entry name" value="Ns1 effector domain-like"/>
    <property type="match status" value="1"/>
</dbReference>
<dbReference type="SUPFAM" id="SSF47060">
    <property type="entry name" value="S15/NS1 RNA-binding domain"/>
    <property type="match status" value="1"/>
</dbReference>
<feature type="chain" id="PRO_0000078942" description="Non-structural protein 1">
    <location>
        <begin position="1"/>
        <end position="230"/>
    </location>
</feature>
<feature type="region of interest" description="RNA-binding and homodimerization" evidence="1">
    <location>
        <begin position="1"/>
        <end position="73"/>
    </location>
</feature>
<feature type="region of interest" description="CPSF4-binding" evidence="1">
    <location>
        <begin position="180"/>
        <end position="215"/>
    </location>
</feature>
<feature type="region of interest" description="Disordered" evidence="2">
    <location>
        <begin position="208"/>
        <end position="230"/>
    </location>
</feature>
<feature type="region of interest" description="PABPN1-binding" evidence="1">
    <location>
        <begin position="223"/>
        <end position="230"/>
    </location>
</feature>
<feature type="short sequence motif" description="Nuclear localization signal" evidence="1">
    <location>
        <begin position="34"/>
        <end position="38"/>
    </location>
</feature>
<feature type="short sequence motif" description="Nuclear export signal" evidence="1">
    <location>
        <begin position="137"/>
        <end position="146"/>
    </location>
</feature>
<evidence type="ECO:0000255" key="1">
    <source>
        <dbReference type="HAMAP-Rule" id="MF_04066"/>
    </source>
</evidence>
<evidence type="ECO:0000256" key="2">
    <source>
        <dbReference type="SAM" id="MobiDB-lite"/>
    </source>
</evidence>
<comment type="function">
    <text evidence="1">Inhibits post-transcriptional processing of cellular pre-mRNA, by binding and inhibiting two cellular proteins that are required for the 3'-end processing of cellular pre-mRNAs: the 30 kDa cleavage and polyadenylation specificity factor/CPSF4 and the poly(A)-binding protein 2/PABPN1. In turn, unprocessed 3' end pre-mRNAs accumulate in the host nucleus and are no longer exported to the cytoplasm. Cellular protein synthesis is thereby shut off very early after virus infection. Viral protein synthesis is not affected by the inhibition of the cellular 3' end processing machinery because the poly(A) tails of viral mRNAs are produced by the viral polymerase through a stuttering mechanism. Prevents the establishment of the cellular antiviral state by inhibiting TRIM25-mediated RIGI ubiquitination, which normally triggers the antiviral transduction signal that leads to the activation of type I IFN genes by transcription factors IRF3 and IRF7. Also binds poly(A) and U6 snRNA. Inhibits the integrated stress response (ISR) in the infected cell by blocking dsRNA binding by EIF2AK2/PKR and further phosphorylation of EIF2S1/EIF-2ALPHA. Stress granule formation is thus inhibited, which allows protein synthesis and viral replication.</text>
</comment>
<comment type="subunit">
    <text evidence="1">Homodimer. Interacts with host TRIM25 (via coiled coil); this interaction specifically inhibits TRIM25 multimerization and TRIM25-mediated RIGI CARD ubiquitination. Interacts with human EIF2AK2/PKR, CPSF4, IVNS1ABP and PABPN1.</text>
</comment>
<comment type="subcellular location">
    <subcellularLocation>
        <location evidence="1">Host nucleus</location>
    </subcellularLocation>
    <subcellularLocation>
        <location evidence="1">Host cytoplasm</location>
    </subcellularLocation>
    <text evidence="1">In uninfected, transfected cells, NS1 is localized in the nucleus. Only in virus infected cells, the nuclear export signal is unveiled, presumably by a viral protein, and a fraction of NS1 is exported in the cytoplasm.</text>
</comment>
<comment type="alternative products">
    <event type="alternative splicing"/>
    <isoform>
        <id>P13141-1</id>
        <name>NS1</name>
        <sequence type="displayed"/>
    </isoform>
    <isoform>
        <id>P69268-1</id>
        <name>NEP</name>
        <name>NS2</name>
        <sequence type="external"/>
    </isoform>
</comment>
<comment type="domain">
    <text evidence="1">The dsRNA-binding region is required for suppression of RNA silencing.</text>
</comment>
<comment type="PTM">
    <text evidence="1">Upon interferon induction, ISGylated via host HERC5; this results in the impairment of NS1 interaction with RNA targets due to its inability to form homodimers and to interact with host EIF2AK2/PKR.</text>
</comment>
<comment type="similarity">
    <text evidence="1">Belongs to the influenza A viruses NS1 family.</text>
</comment>
<accession>P13141</accession>
<gene>
    <name evidence="1" type="primary">NS</name>
</gene>
<name>NS1_I79A2</name>